<proteinExistence type="inferred from homology"/>
<comment type="function">
    <text evidence="1">ATP-dependent specificity component of the Clp protease. It directs the protease to specific substrates. Can perform chaperone functions in the absence of ClpP.</text>
</comment>
<comment type="subunit">
    <text evidence="1">Component of the ClpX-ClpP complex. Forms a hexameric ring that, in the presence of ATP, binds to fourteen ClpP subunits assembled into a disk-like structure with a central cavity, resembling the structure of eukaryotic proteasomes.</text>
</comment>
<comment type="similarity">
    <text evidence="1">Belongs to the ClpX chaperone family.</text>
</comment>
<reference key="1">
    <citation type="journal article" date="2009" name="PLoS Pathog.">
        <title>Genomic evidence for the evolution of Streptococcus equi: host restriction, increased virulence, and genetic exchange with human pathogens.</title>
        <authorList>
            <person name="Holden M.T.G."/>
            <person name="Heather Z."/>
            <person name="Paillot R."/>
            <person name="Steward K.F."/>
            <person name="Webb K."/>
            <person name="Ainslie F."/>
            <person name="Jourdan T."/>
            <person name="Bason N.C."/>
            <person name="Holroyd N.E."/>
            <person name="Mungall K."/>
            <person name="Quail M.A."/>
            <person name="Sanders M."/>
            <person name="Simmonds M."/>
            <person name="Willey D."/>
            <person name="Brooks K."/>
            <person name="Aanensen D.M."/>
            <person name="Spratt B.G."/>
            <person name="Jolley K.A."/>
            <person name="Maiden M.C.J."/>
            <person name="Kehoe M."/>
            <person name="Chanter N."/>
            <person name="Bentley S.D."/>
            <person name="Robinson C."/>
            <person name="Maskell D.J."/>
            <person name="Parkhill J."/>
            <person name="Waller A.S."/>
        </authorList>
    </citation>
    <scope>NUCLEOTIDE SEQUENCE [LARGE SCALE GENOMIC DNA]</scope>
    <source>
        <strain>4047</strain>
    </source>
</reference>
<organism>
    <name type="scientific">Streptococcus equi subsp. equi (strain 4047)</name>
    <dbReference type="NCBI Taxonomy" id="553482"/>
    <lineage>
        <taxon>Bacteria</taxon>
        <taxon>Bacillati</taxon>
        <taxon>Bacillota</taxon>
        <taxon>Bacilli</taxon>
        <taxon>Lactobacillales</taxon>
        <taxon>Streptococcaceae</taxon>
        <taxon>Streptococcus</taxon>
    </lineage>
</organism>
<feature type="chain" id="PRO_1000123851" description="ATP-dependent Clp protease ATP-binding subunit ClpX">
    <location>
        <begin position="1"/>
        <end position="409"/>
    </location>
</feature>
<feature type="domain" description="ClpX-type ZB" evidence="2">
    <location>
        <begin position="1"/>
        <end position="54"/>
    </location>
</feature>
<feature type="binding site" evidence="2">
    <location>
        <position position="13"/>
    </location>
    <ligand>
        <name>Zn(2+)</name>
        <dbReference type="ChEBI" id="CHEBI:29105"/>
    </ligand>
</feature>
<feature type="binding site" evidence="2">
    <location>
        <position position="16"/>
    </location>
    <ligand>
        <name>Zn(2+)</name>
        <dbReference type="ChEBI" id="CHEBI:29105"/>
    </ligand>
</feature>
<feature type="binding site" evidence="2">
    <location>
        <position position="35"/>
    </location>
    <ligand>
        <name>Zn(2+)</name>
        <dbReference type="ChEBI" id="CHEBI:29105"/>
    </ligand>
</feature>
<feature type="binding site" evidence="2">
    <location>
        <position position="38"/>
    </location>
    <ligand>
        <name>Zn(2+)</name>
        <dbReference type="ChEBI" id="CHEBI:29105"/>
    </ligand>
</feature>
<feature type="binding site" evidence="1">
    <location>
        <begin position="119"/>
        <end position="126"/>
    </location>
    <ligand>
        <name>ATP</name>
        <dbReference type="ChEBI" id="CHEBI:30616"/>
    </ligand>
</feature>
<dbReference type="EMBL" id="FM204883">
    <property type="protein sequence ID" value="CAW93774.1"/>
    <property type="molecule type" value="Genomic_DNA"/>
</dbReference>
<dbReference type="RefSeq" id="WP_012679520.1">
    <property type="nucleotide sequence ID" value="NC_012471.1"/>
</dbReference>
<dbReference type="SMR" id="C0M9R7"/>
<dbReference type="KEGG" id="seu:SEQ_1113"/>
<dbReference type="HOGENOM" id="CLU_014218_8_2_9"/>
<dbReference type="OrthoDB" id="9804062at2"/>
<dbReference type="Proteomes" id="UP000001365">
    <property type="component" value="Chromosome"/>
</dbReference>
<dbReference type="GO" id="GO:0009376">
    <property type="term" value="C:HslUV protease complex"/>
    <property type="evidence" value="ECO:0007669"/>
    <property type="project" value="TreeGrafter"/>
</dbReference>
<dbReference type="GO" id="GO:0005524">
    <property type="term" value="F:ATP binding"/>
    <property type="evidence" value="ECO:0007669"/>
    <property type="project" value="UniProtKB-UniRule"/>
</dbReference>
<dbReference type="GO" id="GO:0016887">
    <property type="term" value="F:ATP hydrolysis activity"/>
    <property type="evidence" value="ECO:0007669"/>
    <property type="project" value="InterPro"/>
</dbReference>
<dbReference type="GO" id="GO:0140662">
    <property type="term" value="F:ATP-dependent protein folding chaperone"/>
    <property type="evidence" value="ECO:0007669"/>
    <property type="project" value="InterPro"/>
</dbReference>
<dbReference type="GO" id="GO:0046983">
    <property type="term" value="F:protein dimerization activity"/>
    <property type="evidence" value="ECO:0007669"/>
    <property type="project" value="InterPro"/>
</dbReference>
<dbReference type="GO" id="GO:0051082">
    <property type="term" value="F:unfolded protein binding"/>
    <property type="evidence" value="ECO:0007669"/>
    <property type="project" value="UniProtKB-UniRule"/>
</dbReference>
<dbReference type="GO" id="GO:0008270">
    <property type="term" value="F:zinc ion binding"/>
    <property type="evidence" value="ECO:0007669"/>
    <property type="project" value="InterPro"/>
</dbReference>
<dbReference type="GO" id="GO:0051301">
    <property type="term" value="P:cell division"/>
    <property type="evidence" value="ECO:0007669"/>
    <property type="project" value="TreeGrafter"/>
</dbReference>
<dbReference type="GO" id="GO:0051603">
    <property type="term" value="P:proteolysis involved in protein catabolic process"/>
    <property type="evidence" value="ECO:0007669"/>
    <property type="project" value="TreeGrafter"/>
</dbReference>
<dbReference type="CDD" id="cd19497">
    <property type="entry name" value="RecA-like_ClpX"/>
    <property type="match status" value="1"/>
</dbReference>
<dbReference type="FunFam" id="1.10.8.60:FF:000002">
    <property type="entry name" value="ATP-dependent Clp protease ATP-binding subunit ClpX"/>
    <property type="match status" value="1"/>
</dbReference>
<dbReference type="FunFam" id="3.40.50.300:FF:000005">
    <property type="entry name" value="ATP-dependent Clp protease ATP-binding subunit ClpX"/>
    <property type="match status" value="1"/>
</dbReference>
<dbReference type="Gene3D" id="1.10.8.60">
    <property type="match status" value="1"/>
</dbReference>
<dbReference type="Gene3D" id="6.20.220.10">
    <property type="entry name" value="ClpX chaperone, C4-type zinc finger domain"/>
    <property type="match status" value="1"/>
</dbReference>
<dbReference type="Gene3D" id="3.40.50.300">
    <property type="entry name" value="P-loop containing nucleotide triphosphate hydrolases"/>
    <property type="match status" value="1"/>
</dbReference>
<dbReference type="HAMAP" id="MF_00175">
    <property type="entry name" value="ClpX"/>
    <property type="match status" value="1"/>
</dbReference>
<dbReference type="InterPro" id="IPR003593">
    <property type="entry name" value="AAA+_ATPase"/>
</dbReference>
<dbReference type="InterPro" id="IPR050052">
    <property type="entry name" value="ATP-dep_Clp_protease_ClpX"/>
</dbReference>
<dbReference type="InterPro" id="IPR003959">
    <property type="entry name" value="ATPase_AAA_core"/>
</dbReference>
<dbReference type="InterPro" id="IPR019489">
    <property type="entry name" value="Clp_ATPase_C"/>
</dbReference>
<dbReference type="InterPro" id="IPR004487">
    <property type="entry name" value="Clp_protease_ATP-bd_su_ClpX"/>
</dbReference>
<dbReference type="InterPro" id="IPR046425">
    <property type="entry name" value="ClpX_bact"/>
</dbReference>
<dbReference type="InterPro" id="IPR027417">
    <property type="entry name" value="P-loop_NTPase"/>
</dbReference>
<dbReference type="InterPro" id="IPR010603">
    <property type="entry name" value="Znf_CppX_C4"/>
</dbReference>
<dbReference type="InterPro" id="IPR038366">
    <property type="entry name" value="Znf_CppX_C4_sf"/>
</dbReference>
<dbReference type="NCBIfam" id="TIGR00382">
    <property type="entry name" value="clpX"/>
    <property type="match status" value="1"/>
</dbReference>
<dbReference type="NCBIfam" id="NF003745">
    <property type="entry name" value="PRK05342.1"/>
    <property type="match status" value="1"/>
</dbReference>
<dbReference type="PANTHER" id="PTHR48102:SF7">
    <property type="entry name" value="ATP-DEPENDENT CLP PROTEASE ATP-BINDING SUBUNIT CLPX-LIKE, MITOCHONDRIAL"/>
    <property type="match status" value="1"/>
</dbReference>
<dbReference type="PANTHER" id="PTHR48102">
    <property type="entry name" value="ATP-DEPENDENT CLP PROTEASE ATP-BINDING SUBUNIT CLPX-LIKE, MITOCHONDRIAL-RELATED"/>
    <property type="match status" value="1"/>
</dbReference>
<dbReference type="Pfam" id="PF07724">
    <property type="entry name" value="AAA_2"/>
    <property type="match status" value="1"/>
</dbReference>
<dbReference type="Pfam" id="PF10431">
    <property type="entry name" value="ClpB_D2-small"/>
    <property type="match status" value="1"/>
</dbReference>
<dbReference type="Pfam" id="PF06689">
    <property type="entry name" value="zf-C4_ClpX"/>
    <property type="match status" value="1"/>
</dbReference>
<dbReference type="SMART" id="SM00382">
    <property type="entry name" value="AAA"/>
    <property type="match status" value="1"/>
</dbReference>
<dbReference type="SMART" id="SM01086">
    <property type="entry name" value="ClpB_D2-small"/>
    <property type="match status" value="1"/>
</dbReference>
<dbReference type="SMART" id="SM00994">
    <property type="entry name" value="zf-C4_ClpX"/>
    <property type="match status" value="1"/>
</dbReference>
<dbReference type="SUPFAM" id="SSF57716">
    <property type="entry name" value="Glucocorticoid receptor-like (DNA-binding domain)"/>
    <property type="match status" value="1"/>
</dbReference>
<dbReference type="SUPFAM" id="SSF52540">
    <property type="entry name" value="P-loop containing nucleoside triphosphate hydrolases"/>
    <property type="match status" value="1"/>
</dbReference>
<dbReference type="PROSITE" id="PS51902">
    <property type="entry name" value="CLPX_ZB"/>
    <property type="match status" value="1"/>
</dbReference>
<sequence>MAGNRSNDIKVHCSFCGKSQDEVKKIIAGNNVFICNECVALSQEIIKEELAEEVLADLTEVPKPKELLEILNQYVIGQERAKRALSVAVYNHYKRISFTESRDDDDVDLQKSNILMIGPTGSGKTFLAQTLAKSLNVPFAIADATSLTEAGYVGEDVENILLKLIQAADYNVERAERGIIYVDEIDKIAKKGENVSITRDVSGEGVQQALLKIIEGTVASVPPQGGRKHPNQEMVQIDTKNILFIVGGAFDGIEEIVKQRLGEKIIGFGQNSRKIDDNASYMQEIIAEDIQKFGLIPEFIGRLPVVAALEQLNTEDLIRILTEPRNALVKQYQALLSYDGVELEFEKGALEAIAGRAIERKTGARGLRSIIEETMLDIMFEVPSQEEVIKVRITKEAVEGQSKPILEIA</sequence>
<gene>
    <name evidence="1" type="primary">clpX</name>
    <name type="ordered locus">SEQ_1113</name>
</gene>
<keyword id="KW-0067">ATP-binding</keyword>
<keyword id="KW-0143">Chaperone</keyword>
<keyword id="KW-0479">Metal-binding</keyword>
<keyword id="KW-0547">Nucleotide-binding</keyword>
<keyword id="KW-0862">Zinc</keyword>
<evidence type="ECO:0000255" key="1">
    <source>
        <dbReference type="HAMAP-Rule" id="MF_00175"/>
    </source>
</evidence>
<evidence type="ECO:0000255" key="2">
    <source>
        <dbReference type="PROSITE-ProRule" id="PRU01250"/>
    </source>
</evidence>
<accession>C0M9R7</accession>
<protein>
    <recommendedName>
        <fullName evidence="1">ATP-dependent Clp protease ATP-binding subunit ClpX</fullName>
    </recommendedName>
</protein>
<name>CLPX_STRE4</name>